<sequence>MNIRPLQDRVLVRRAEEEKKSAGGIILTGNAQEKPSQGEVVAVGNGKKLDNGTTLPMDVKVGDKVLFGKYSGSEVKVGDETLLMMREEDIMGIIA</sequence>
<reference key="1">
    <citation type="journal article" date="2006" name="J. Bacteriol.">
        <title>Chromosome rearrangement and diversification of Francisella tularensis revealed by the type B (OSU18) genome sequence.</title>
        <authorList>
            <person name="Petrosino J.F."/>
            <person name="Xiang Q."/>
            <person name="Karpathy S.E."/>
            <person name="Jiang H."/>
            <person name="Yerrapragada S."/>
            <person name="Liu Y."/>
            <person name="Gioia J."/>
            <person name="Hemphill L."/>
            <person name="Gonzalez A."/>
            <person name="Raghavan T.M."/>
            <person name="Uzman A."/>
            <person name="Fox G.E."/>
            <person name="Highlander S."/>
            <person name="Reichard M."/>
            <person name="Morton R.J."/>
            <person name="Clinkenbeard K.D."/>
            <person name="Weinstock G.M."/>
        </authorList>
    </citation>
    <scope>NUCLEOTIDE SEQUENCE [LARGE SCALE GENOMIC DNA]</scope>
    <source>
        <strain>OSU18</strain>
    </source>
</reference>
<evidence type="ECO:0000255" key="1">
    <source>
        <dbReference type="HAMAP-Rule" id="MF_00580"/>
    </source>
</evidence>
<accession>Q0BKF6</accession>
<keyword id="KW-0143">Chaperone</keyword>
<keyword id="KW-0963">Cytoplasm</keyword>
<protein>
    <recommendedName>
        <fullName evidence="1">Co-chaperonin GroES</fullName>
    </recommendedName>
    <alternativeName>
        <fullName evidence="1">10 kDa chaperonin</fullName>
    </alternativeName>
    <alternativeName>
        <fullName evidence="1">Chaperonin-10</fullName>
        <shortName evidence="1">Cpn10</shortName>
    </alternativeName>
</protein>
<proteinExistence type="inferred from homology"/>
<feature type="chain" id="PRO_1000025262" description="Co-chaperonin GroES">
    <location>
        <begin position="1"/>
        <end position="95"/>
    </location>
</feature>
<organism>
    <name type="scientific">Francisella tularensis subsp. holarctica (strain OSU18)</name>
    <dbReference type="NCBI Taxonomy" id="393011"/>
    <lineage>
        <taxon>Bacteria</taxon>
        <taxon>Pseudomonadati</taxon>
        <taxon>Pseudomonadota</taxon>
        <taxon>Gammaproteobacteria</taxon>
        <taxon>Thiotrichales</taxon>
        <taxon>Francisellaceae</taxon>
        <taxon>Francisella</taxon>
    </lineage>
</organism>
<comment type="function">
    <text evidence="1">Together with the chaperonin GroEL, plays an essential role in assisting protein folding. The GroEL-GroES system forms a nano-cage that allows encapsulation of the non-native substrate proteins and provides a physical environment optimized to promote and accelerate protein folding. GroES binds to the apical surface of the GroEL ring, thereby capping the opening of the GroEL channel.</text>
</comment>
<comment type="subunit">
    <text evidence="1">Heptamer of 7 subunits arranged in a ring. Interacts with the chaperonin GroEL.</text>
</comment>
<comment type="subcellular location">
    <subcellularLocation>
        <location evidence="1">Cytoplasm</location>
    </subcellularLocation>
</comment>
<comment type="similarity">
    <text evidence="1">Belongs to the GroES chaperonin family.</text>
</comment>
<dbReference type="EMBL" id="CP000437">
    <property type="protein sequence ID" value="ABI83428.1"/>
    <property type="molecule type" value="Genomic_DNA"/>
</dbReference>
<dbReference type="RefSeq" id="WP_003017172.1">
    <property type="nucleotide sequence ID" value="NC_017463.1"/>
</dbReference>
<dbReference type="SMR" id="Q0BKF6"/>
<dbReference type="KEGG" id="fth:FTH_1652"/>
<dbReference type="GO" id="GO:0005737">
    <property type="term" value="C:cytoplasm"/>
    <property type="evidence" value="ECO:0007669"/>
    <property type="project" value="UniProtKB-SubCell"/>
</dbReference>
<dbReference type="GO" id="GO:0005524">
    <property type="term" value="F:ATP binding"/>
    <property type="evidence" value="ECO:0007669"/>
    <property type="project" value="InterPro"/>
</dbReference>
<dbReference type="GO" id="GO:0046872">
    <property type="term" value="F:metal ion binding"/>
    <property type="evidence" value="ECO:0007669"/>
    <property type="project" value="TreeGrafter"/>
</dbReference>
<dbReference type="GO" id="GO:0044183">
    <property type="term" value="F:protein folding chaperone"/>
    <property type="evidence" value="ECO:0007669"/>
    <property type="project" value="InterPro"/>
</dbReference>
<dbReference type="GO" id="GO:0051087">
    <property type="term" value="F:protein-folding chaperone binding"/>
    <property type="evidence" value="ECO:0007669"/>
    <property type="project" value="TreeGrafter"/>
</dbReference>
<dbReference type="GO" id="GO:0051082">
    <property type="term" value="F:unfolded protein binding"/>
    <property type="evidence" value="ECO:0007669"/>
    <property type="project" value="TreeGrafter"/>
</dbReference>
<dbReference type="GO" id="GO:0051085">
    <property type="term" value="P:chaperone cofactor-dependent protein refolding"/>
    <property type="evidence" value="ECO:0007669"/>
    <property type="project" value="TreeGrafter"/>
</dbReference>
<dbReference type="CDD" id="cd00320">
    <property type="entry name" value="cpn10"/>
    <property type="match status" value="1"/>
</dbReference>
<dbReference type="FunFam" id="2.30.33.40:FF:000001">
    <property type="entry name" value="10 kDa chaperonin"/>
    <property type="match status" value="1"/>
</dbReference>
<dbReference type="Gene3D" id="2.30.33.40">
    <property type="entry name" value="GroES chaperonin"/>
    <property type="match status" value="1"/>
</dbReference>
<dbReference type="HAMAP" id="MF_00580">
    <property type="entry name" value="CH10"/>
    <property type="match status" value="1"/>
</dbReference>
<dbReference type="InterPro" id="IPR020818">
    <property type="entry name" value="Chaperonin_GroES"/>
</dbReference>
<dbReference type="InterPro" id="IPR037124">
    <property type="entry name" value="Chaperonin_GroES_sf"/>
</dbReference>
<dbReference type="InterPro" id="IPR018369">
    <property type="entry name" value="Chaprnonin_Cpn10_CS"/>
</dbReference>
<dbReference type="InterPro" id="IPR011032">
    <property type="entry name" value="GroES-like_sf"/>
</dbReference>
<dbReference type="NCBIfam" id="NF001527">
    <property type="entry name" value="PRK00364.1-2"/>
    <property type="match status" value="1"/>
</dbReference>
<dbReference type="NCBIfam" id="NF001531">
    <property type="entry name" value="PRK00364.2-2"/>
    <property type="match status" value="1"/>
</dbReference>
<dbReference type="NCBIfam" id="NF001533">
    <property type="entry name" value="PRK00364.2-4"/>
    <property type="match status" value="1"/>
</dbReference>
<dbReference type="PANTHER" id="PTHR10772">
    <property type="entry name" value="10 KDA HEAT SHOCK PROTEIN"/>
    <property type="match status" value="1"/>
</dbReference>
<dbReference type="PANTHER" id="PTHR10772:SF58">
    <property type="entry name" value="CO-CHAPERONIN GROES"/>
    <property type="match status" value="1"/>
</dbReference>
<dbReference type="Pfam" id="PF00166">
    <property type="entry name" value="Cpn10"/>
    <property type="match status" value="1"/>
</dbReference>
<dbReference type="PRINTS" id="PR00297">
    <property type="entry name" value="CHAPERONIN10"/>
</dbReference>
<dbReference type="SMART" id="SM00883">
    <property type="entry name" value="Cpn10"/>
    <property type="match status" value="1"/>
</dbReference>
<dbReference type="SUPFAM" id="SSF50129">
    <property type="entry name" value="GroES-like"/>
    <property type="match status" value="1"/>
</dbReference>
<dbReference type="PROSITE" id="PS00681">
    <property type="entry name" value="CHAPERONINS_CPN10"/>
    <property type="match status" value="1"/>
</dbReference>
<name>CH10_FRATO</name>
<gene>
    <name evidence="1" type="primary">groES</name>
    <name evidence="1" type="synonym">groS</name>
    <name type="ordered locus">FTH_1652</name>
</gene>